<gene>
    <name type="primary">MAEL</name>
    <name type="ORF">QtsA-15923</name>
</gene>
<comment type="function">
    <text evidence="1">Plays a central role during spermatogenesis by repressing transposable elements and preventing their mobilization, which is essential for the germline integrity. Acts via the piRNA metabolic process, which mediates the repression of transposable elements during meiosis by forming complexes composed of piRNAs and Piwi proteins and governs the methylation and subsequent repression of transposons. Its association with piP-bodies suggests a participation in the secondary piRNAs metabolic process. Required for the localization of germ-cell factors to the meiotic nuage (By similarity).</text>
</comment>
<comment type="subunit">
    <text evidence="1">Interacts with SMARCB1, SIN3B and DDX4. Interacts with piRNA-associated proteins TDRD1, PIWIL1 and PIWIL2 (By similarity). Interacts with TEX19 (By similarity).</text>
</comment>
<comment type="subcellular location">
    <subcellularLocation>
        <location evidence="1">Cytoplasm</location>
    </subcellularLocation>
    <subcellularLocation>
        <location evidence="1">Nucleus</location>
    </subcellularLocation>
    <text evidence="1">Component of the meiotic nuage, also named P granule, a germ-cell-specific organelle required to repress transposon activity during meiosis. Specifically localizes to piP-bodies, a subset of the nuage which contains secondary piRNAs (By similarity).</text>
</comment>
<comment type="similarity">
    <text evidence="3">Belongs to the maelstrom family.</text>
</comment>
<protein>
    <recommendedName>
        <fullName>Protein maelstrom homolog</fullName>
    </recommendedName>
</protein>
<proteinExistence type="evidence at transcript level"/>
<organism>
    <name type="scientific">Macaca fascicularis</name>
    <name type="common">Crab-eating macaque</name>
    <name type="synonym">Cynomolgus monkey</name>
    <dbReference type="NCBI Taxonomy" id="9541"/>
    <lineage>
        <taxon>Eukaryota</taxon>
        <taxon>Metazoa</taxon>
        <taxon>Chordata</taxon>
        <taxon>Craniata</taxon>
        <taxon>Vertebrata</taxon>
        <taxon>Euteleostomi</taxon>
        <taxon>Mammalia</taxon>
        <taxon>Eutheria</taxon>
        <taxon>Euarchontoglires</taxon>
        <taxon>Primates</taxon>
        <taxon>Haplorrhini</taxon>
        <taxon>Catarrhini</taxon>
        <taxon>Cercopithecidae</taxon>
        <taxon>Cercopithecinae</taxon>
        <taxon>Macaca</taxon>
    </lineage>
</organism>
<accession>Q4R786</accession>
<reference key="1">
    <citation type="submission" date="2005-06" db="EMBL/GenBank/DDBJ databases">
        <title>DNA sequences of macaque genes expressed in brain or testis and its evolutionary implications.</title>
        <authorList>
            <consortium name="International consortium for macaque cDNA sequencing and analysis"/>
        </authorList>
    </citation>
    <scope>NUCLEOTIDE SEQUENCE [LARGE SCALE MRNA]</scope>
    <source>
        <tissue>Testis</tissue>
    </source>
</reference>
<sequence>MPNRKASRNAYYFFVQEKIPELRRRGLPVARVADAIPYCSADWALLREEEKEKYAEMAREWRAAQGKDSGPSEKQKPVFTPLRKPGMLVPKQNVSPPDMSTLSLKGDQALLGGIFYFLNIFSHGELPPHCEQRFLPCEIGCVKYSLQEGIMADFHSFINPGEIPRGFRFHCQAASDSSHKIPISNFERGHNQATVLQNLYRFIHPNPGNWPPIYCKSDDRTRVNWCLKHMAKASEIRQDLQLLTVEDLVVGIYQQKFLKEPSKTWIRSLLDVAMWDYSSNTRCKWHEENDILFCALAVCKKIAYCISNSLATLFGIQLTEAHVPLQDYEASNSVTPKMVVLDAGRYQKLRVGSSGFSHFNSANQEQRSNTPIGDYPSRAKISGQNSSVRGRGITRLLESISNSSSNIHKFSNCDTSLSSYMSQKDGYKSFSSLS</sequence>
<dbReference type="EMBL" id="AB168935">
    <property type="protein sequence ID" value="BAE01036.1"/>
    <property type="molecule type" value="mRNA"/>
</dbReference>
<dbReference type="RefSeq" id="NP_001306450.1">
    <property type="nucleotide sequence ID" value="NM_001319521.1"/>
</dbReference>
<dbReference type="RefSeq" id="XP_065376312.1">
    <property type="nucleotide sequence ID" value="XM_065520240.1"/>
</dbReference>
<dbReference type="BMRB" id="Q4R786"/>
<dbReference type="SMR" id="Q4R786"/>
<dbReference type="STRING" id="9541.ENSMFAP00000007353"/>
<dbReference type="GeneID" id="102146583"/>
<dbReference type="VEuPathDB" id="HostDB:ENSMFAG00000040593"/>
<dbReference type="eggNOG" id="ENOG502QTQB">
    <property type="taxonomic scope" value="Eukaryota"/>
</dbReference>
<dbReference type="OMA" id="KHEIFDH"/>
<dbReference type="Proteomes" id="UP000233100">
    <property type="component" value="Chromosome 1"/>
</dbReference>
<dbReference type="GO" id="GO:0005737">
    <property type="term" value="C:cytoplasm"/>
    <property type="evidence" value="ECO:0000250"/>
    <property type="project" value="UniProtKB"/>
</dbReference>
<dbReference type="GO" id="GO:0005634">
    <property type="term" value="C:nucleus"/>
    <property type="evidence" value="ECO:0000250"/>
    <property type="project" value="UniProtKB"/>
</dbReference>
<dbReference type="GO" id="GO:0043186">
    <property type="term" value="C:P granule"/>
    <property type="evidence" value="ECO:0000250"/>
    <property type="project" value="UniProtKB"/>
</dbReference>
<dbReference type="GO" id="GO:0071547">
    <property type="term" value="C:piP-body"/>
    <property type="evidence" value="ECO:0000250"/>
    <property type="project" value="UniProtKB"/>
</dbReference>
<dbReference type="GO" id="GO:0043565">
    <property type="term" value="F:sequence-specific DNA binding"/>
    <property type="evidence" value="ECO:0007669"/>
    <property type="project" value="TreeGrafter"/>
</dbReference>
<dbReference type="GO" id="GO:0030154">
    <property type="term" value="P:cell differentiation"/>
    <property type="evidence" value="ECO:0007669"/>
    <property type="project" value="UniProtKB-KW"/>
</dbReference>
<dbReference type="GO" id="GO:0007140">
    <property type="term" value="P:male meiotic nuclear division"/>
    <property type="evidence" value="ECO:0007669"/>
    <property type="project" value="TreeGrafter"/>
</dbReference>
<dbReference type="GO" id="GO:0045892">
    <property type="term" value="P:negative regulation of DNA-templated transcription"/>
    <property type="evidence" value="ECO:0007669"/>
    <property type="project" value="TreeGrafter"/>
</dbReference>
<dbReference type="GO" id="GO:0034587">
    <property type="term" value="P:piRNA processing"/>
    <property type="evidence" value="ECO:0000250"/>
    <property type="project" value="UniProtKB"/>
</dbReference>
<dbReference type="GO" id="GO:0060964">
    <property type="term" value="P:regulation of miRNA-mediated gene silencing"/>
    <property type="evidence" value="ECO:0007669"/>
    <property type="project" value="InterPro"/>
</dbReference>
<dbReference type="GO" id="GO:0031047">
    <property type="term" value="P:regulatory ncRNA-mediated gene silencing"/>
    <property type="evidence" value="ECO:0000250"/>
    <property type="project" value="UniProtKB"/>
</dbReference>
<dbReference type="GO" id="GO:0007283">
    <property type="term" value="P:spermatogenesis"/>
    <property type="evidence" value="ECO:0000250"/>
    <property type="project" value="UniProtKB"/>
</dbReference>
<dbReference type="CDD" id="cd21992">
    <property type="entry name" value="HMG-box_MAEL"/>
    <property type="match status" value="1"/>
</dbReference>
<dbReference type="FunFam" id="1.10.30.10:FF:000035">
    <property type="entry name" value="Maelstrom spermatogenic transposon silencer"/>
    <property type="match status" value="1"/>
</dbReference>
<dbReference type="Gene3D" id="1.10.30.10">
    <property type="entry name" value="High mobility group box domain"/>
    <property type="match status" value="1"/>
</dbReference>
<dbReference type="InterPro" id="IPR009071">
    <property type="entry name" value="HMG_box_dom"/>
</dbReference>
<dbReference type="InterPro" id="IPR036910">
    <property type="entry name" value="HMG_box_dom_sf"/>
</dbReference>
<dbReference type="InterPro" id="IPR024970">
    <property type="entry name" value="Maelstrom"/>
</dbReference>
<dbReference type="InterPro" id="IPR039259">
    <property type="entry name" value="Protein_maelstrom"/>
</dbReference>
<dbReference type="PANTHER" id="PTHR21358">
    <property type="entry name" value="PROTEIN MAELSTROM HOMOLOG"/>
    <property type="match status" value="1"/>
</dbReference>
<dbReference type="PANTHER" id="PTHR21358:SF4">
    <property type="entry name" value="PROTEIN MAELSTROM HOMOLOG"/>
    <property type="match status" value="1"/>
</dbReference>
<dbReference type="Pfam" id="PF09011">
    <property type="entry name" value="HMG_box_2"/>
    <property type="match status" value="1"/>
</dbReference>
<dbReference type="Pfam" id="PF13017">
    <property type="entry name" value="Maelstrom"/>
    <property type="match status" value="1"/>
</dbReference>
<dbReference type="SUPFAM" id="SSF47095">
    <property type="entry name" value="HMG-box"/>
    <property type="match status" value="1"/>
</dbReference>
<name>MAEL_MACFA</name>
<feature type="chain" id="PRO_0000232502" description="Protein maelstrom homolog">
    <location>
        <begin position="1"/>
        <end position="434"/>
    </location>
</feature>
<feature type="DNA-binding region" description="HMG box">
    <location>
        <begin position="4"/>
        <end position="73"/>
    </location>
</feature>
<feature type="region of interest" description="Disordered" evidence="2">
    <location>
        <begin position="62"/>
        <end position="94"/>
    </location>
</feature>
<feature type="region of interest" description="Disordered" evidence="2">
    <location>
        <begin position="357"/>
        <end position="385"/>
    </location>
</feature>
<feature type="compositionally biased region" description="Polar residues" evidence="2">
    <location>
        <begin position="357"/>
        <end position="371"/>
    </location>
</feature>
<evidence type="ECO:0000250" key="1">
    <source>
        <dbReference type="UniProtKB" id="Q8BVN9"/>
    </source>
</evidence>
<evidence type="ECO:0000256" key="2">
    <source>
        <dbReference type="SAM" id="MobiDB-lite"/>
    </source>
</evidence>
<evidence type="ECO:0000305" key="3"/>
<keyword id="KW-0963">Cytoplasm</keyword>
<keyword id="KW-0217">Developmental protein</keyword>
<keyword id="KW-0221">Differentiation</keyword>
<keyword id="KW-0238">DNA-binding</keyword>
<keyword id="KW-0469">Meiosis</keyword>
<keyword id="KW-0539">Nucleus</keyword>
<keyword id="KW-1185">Reference proteome</keyword>
<keyword id="KW-0943">RNA-mediated gene silencing</keyword>
<keyword id="KW-0744">Spermatogenesis</keyword>